<organism>
    <name type="scientific">Staphylococcus aureus (strain MW2)</name>
    <dbReference type="NCBI Taxonomy" id="196620"/>
    <lineage>
        <taxon>Bacteria</taxon>
        <taxon>Bacillati</taxon>
        <taxon>Bacillota</taxon>
        <taxon>Bacilli</taxon>
        <taxon>Bacillales</taxon>
        <taxon>Staphylococcaceae</taxon>
        <taxon>Staphylococcus</taxon>
    </lineage>
</organism>
<dbReference type="EC" id="6.3.2.7" evidence="1"/>
<dbReference type="EMBL" id="BA000033">
    <property type="protein sequence ID" value="BAB94764.1"/>
    <property type="molecule type" value="Genomic_DNA"/>
</dbReference>
<dbReference type="RefSeq" id="WP_000340131.1">
    <property type="nucleotide sequence ID" value="NC_003923.1"/>
</dbReference>
<dbReference type="SMR" id="Q8NXC2"/>
<dbReference type="KEGG" id="sam:MW0899"/>
<dbReference type="HOGENOM" id="CLU_022291_0_1_9"/>
<dbReference type="UniPathway" id="UPA00219"/>
<dbReference type="GO" id="GO:0005737">
    <property type="term" value="C:cytoplasm"/>
    <property type="evidence" value="ECO:0007669"/>
    <property type="project" value="UniProtKB-SubCell"/>
</dbReference>
<dbReference type="GO" id="GO:0005524">
    <property type="term" value="F:ATP binding"/>
    <property type="evidence" value="ECO:0007669"/>
    <property type="project" value="UniProtKB-UniRule"/>
</dbReference>
<dbReference type="GO" id="GO:0000287">
    <property type="term" value="F:magnesium ion binding"/>
    <property type="evidence" value="ECO:0007669"/>
    <property type="project" value="UniProtKB-UniRule"/>
</dbReference>
<dbReference type="GO" id="GO:0047482">
    <property type="term" value="F:UDP-N-acetylmuramoyl-L-alanyl-D-glutamate-L-lysine ligase activity"/>
    <property type="evidence" value="ECO:0007669"/>
    <property type="project" value="UniProtKB-UniRule"/>
</dbReference>
<dbReference type="GO" id="GO:0051301">
    <property type="term" value="P:cell division"/>
    <property type="evidence" value="ECO:0007669"/>
    <property type="project" value="UniProtKB-KW"/>
</dbReference>
<dbReference type="GO" id="GO:0071555">
    <property type="term" value="P:cell wall organization"/>
    <property type="evidence" value="ECO:0007669"/>
    <property type="project" value="UniProtKB-KW"/>
</dbReference>
<dbReference type="GO" id="GO:0009252">
    <property type="term" value="P:peptidoglycan biosynthetic process"/>
    <property type="evidence" value="ECO:0007669"/>
    <property type="project" value="UniProtKB-UniRule"/>
</dbReference>
<dbReference type="GO" id="GO:0008360">
    <property type="term" value="P:regulation of cell shape"/>
    <property type="evidence" value="ECO:0007669"/>
    <property type="project" value="UniProtKB-KW"/>
</dbReference>
<dbReference type="Gene3D" id="3.90.190.20">
    <property type="entry name" value="Mur ligase, C-terminal domain"/>
    <property type="match status" value="1"/>
</dbReference>
<dbReference type="Gene3D" id="3.40.1190.10">
    <property type="entry name" value="Mur-like, catalytic domain"/>
    <property type="match status" value="1"/>
</dbReference>
<dbReference type="Gene3D" id="3.40.1390.10">
    <property type="entry name" value="MurE/MurF, N-terminal domain"/>
    <property type="match status" value="1"/>
</dbReference>
<dbReference type="HAMAP" id="MF_00208">
    <property type="entry name" value="MurE"/>
    <property type="match status" value="1"/>
</dbReference>
<dbReference type="InterPro" id="IPR036565">
    <property type="entry name" value="Mur-like_cat_sf"/>
</dbReference>
<dbReference type="InterPro" id="IPR004101">
    <property type="entry name" value="Mur_ligase_C"/>
</dbReference>
<dbReference type="InterPro" id="IPR036615">
    <property type="entry name" value="Mur_ligase_C_dom_sf"/>
</dbReference>
<dbReference type="InterPro" id="IPR013221">
    <property type="entry name" value="Mur_ligase_cen"/>
</dbReference>
<dbReference type="InterPro" id="IPR035911">
    <property type="entry name" value="MurE/MurF_N"/>
</dbReference>
<dbReference type="InterPro" id="IPR005761">
    <property type="entry name" value="UDP-N-AcMur-Glu-dNH2Pim_ligase"/>
</dbReference>
<dbReference type="NCBIfam" id="TIGR01085">
    <property type="entry name" value="murE"/>
    <property type="match status" value="1"/>
</dbReference>
<dbReference type="NCBIfam" id="NF001126">
    <property type="entry name" value="PRK00139.1-4"/>
    <property type="match status" value="1"/>
</dbReference>
<dbReference type="NCBIfam" id="NF010628">
    <property type="entry name" value="PRK14022.1"/>
    <property type="match status" value="1"/>
</dbReference>
<dbReference type="PANTHER" id="PTHR23135">
    <property type="entry name" value="MUR LIGASE FAMILY MEMBER"/>
    <property type="match status" value="1"/>
</dbReference>
<dbReference type="PANTHER" id="PTHR23135:SF4">
    <property type="entry name" value="UDP-N-ACETYLMURAMOYL-L-ALANYL-D-GLUTAMATE--2,6-DIAMINOPIMELATE LIGASE MURE HOMOLOG, CHLOROPLASTIC"/>
    <property type="match status" value="1"/>
</dbReference>
<dbReference type="Pfam" id="PF02875">
    <property type="entry name" value="Mur_ligase_C"/>
    <property type="match status" value="1"/>
</dbReference>
<dbReference type="Pfam" id="PF08245">
    <property type="entry name" value="Mur_ligase_M"/>
    <property type="match status" value="1"/>
</dbReference>
<dbReference type="SUPFAM" id="SSF53623">
    <property type="entry name" value="MurD-like peptide ligases, catalytic domain"/>
    <property type="match status" value="1"/>
</dbReference>
<dbReference type="SUPFAM" id="SSF53244">
    <property type="entry name" value="MurD-like peptide ligases, peptide-binding domain"/>
    <property type="match status" value="1"/>
</dbReference>
<dbReference type="SUPFAM" id="SSF63418">
    <property type="entry name" value="MurE/MurF N-terminal domain"/>
    <property type="match status" value="1"/>
</dbReference>
<sequence>MDASTLFKKVKVKRVLGSLEQQIDDITTDSRTAREGSIFVASVGYTVDSHKFCQSVADQGCKLVVVNKEQSLPANVTQVVVPDTLRVASILAHTLYDYPSHQLVTFGVTGTNGKTSIATMIHLIQRKLQKNSAYLGTNGFQINETKTKGANTTPETVSLTKKIKEAVDAGAESMTLEVSSHGLVLGRLRGVEFDVAIFSNLTQDHLDFHGTMEAYGHAKSLLFSQLGEDLSKEKYVVLNNDDSFSEYLRTVTPYEVFSYGIDEEAQFMAKNIQESLQGVSFDFVTPFGTYSVKSPYVGKFNISNIMAAMIAVWSKGTSLETIIKAVENLEPVEGRLEVLDPSLPIDLIIDYAHTADGMNKLIDAVQPFVKQKLIFLVGMAGERDLTKTPEMGRVACRADYVIFTPDNPANDDPKMLTAELAKGATHQNYIEFDDRAEGIKHAIDIAEPGDTVVLASKGREPYQIMPGHIKVPHRDDLIGLEAAYKKFGGGPVGQ</sequence>
<evidence type="ECO:0000255" key="1">
    <source>
        <dbReference type="HAMAP-Rule" id="MF_00208"/>
    </source>
</evidence>
<comment type="function">
    <text evidence="1">Catalyzes the addition of L-lysine to the nucleotide precursor UDP-N-acetylmuramoyl-L-alanyl-D-glutamate (UMAG) in the biosynthesis of bacterial cell-wall peptidoglycan.</text>
</comment>
<comment type="catalytic activity">
    <reaction evidence="1">
        <text>UDP-N-acetyl-alpha-D-muramoyl-L-alanyl-D-glutamate + L-lysine + ATP = UDP-N-acetyl-alpha-D-muramoyl-L-alanyl-gamma-D-glutamyl-L-lysine + ADP + phosphate + H(+)</text>
        <dbReference type="Rhea" id="RHEA:17969"/>
        <dbReference type="ChEBI" id="CHEBI:15378"/>
        <dbReference type="ChEBI" id="CHEBI:30616"/>
        <dbReference type="ChEBI" id="CHEBI:32551"/>
        <dbReference type="ChEBI" id="CHEBI:43474"/>
        <dbReference type="ChEBI" id="CHEBI:83900"/>
        <dbReference type="ChEBI" id="CHEBI:83903"/>
        <dbReference type="ChEBI" id="CHEBI:456216"/>
        <dbReference type="EC" id="6.3.2.7"/>
    </reaction>
</comment>
<comment type="pathway">
    <text evidence="1">Cell wall biogenesis; peptidoglycan biosynthesis.</text>
</comment>
<comment type="subcellular location">
    <subcellularLocation>
        <location evidence="1">Cytoplasm</location>
    </subcellularLocation>
</comment>
<comment type="PTM">
    <text evidence="1">Carboxylation is probably crucial for Mg(2+) binding and, consequently, for the gamma-phosphate positioning of ATP.</text>
</comment>
<comment type="similarity">
    <text evidence="1">Belongs to the MurCDEF family. MurE subfamily.</text>
</comment>
<keyword id="KW-0067">ATP-binding</keyword>
<keyword id="KW-0131">Cell cycle</keyword>
<keyword id="KW-0132">Cell division</keyword>
<keyword id="KW-0133">Cell shape</keyword>
<keyword id="KW-0961">Cell wall biogenesis/degradation</keyword>
<keyword id="KW-0963">Cytoplasm</keyword>
<keyword id="KW-0436">Ligase</keyword>
<keyword id="KW-0547">Nucleotide-binding</keyword>
<keyword id="KW-0573">Peptidoglycan synthesis</keyword>
<protein>
    <recommendedName>
        <fullName evidence="1">UDP-N-acetylmuramoyl-L-alanyl-D-glutamate--L-lysine ligase</fullName>
        <ecNumber evidence="1">6.3.2.7</ecNumber>
    </recommendedName>
    <alternativeName>
        <fullName evidence="1">L-lysine-adding enzyme</fullName>
    </alternativeName>
    <alternativeName>
        <fullName evidence="1">UDP-MurNAc-L-Ala-D-Glu:L-Lys ligase</fullName>
    </alternativeName>
    <alternativeName>
        <fullName evidence="1">UDP-MurNAc-tripeptide synthetase</fullName>
    </alternativeName>
    <alternativeName>
        <fullName evidence="1">UDP-N-acetylmuramyl-tripeptide synthetase</fullName>
    </alternativeName>
</protein>
<accession>Q8NXC2</accession>
<proteinExistence type="inferred from homology"/>
<reference key="1">
    <citation type="journal article" date="2002" name="Lancet">
        <title>Genome and virulence determinants of high virulence community-acquired MRSA.</title>
        <authorList>
            <person name="Baba T."/>
            <person name="Takeuchi F."/>
            <person name="Kuroda M."/>
            <person name="Yuzawa H."/>
            <person name="Aoki K."/>
            <person name="Oguchi A."/>
            <person name="Nagai Y."/>
            <person name="Iwama N."/>
            <person name="Asano K."/>
            <person name="Naimi T."/>
            <person name="Kuroda H."/>
            <person name="Cui L."/>
            <person name="Yamamoto K."/>
            <person name="Hiramatsu K."/>
        </authorList>
    </citation>
    <scope>NUCLEOTIDE SEQUENCE [LARGE SCALE GENOMIC DNA]</scope>
    <source>
        <strain>MW2</strain>
    </source>
</reference>
<gene>
    <name evidence="1" type="primary">murE</name>
    <name type="ordered locus">MW0899</name>
</gene>
<name>MURE_STAAW</name>
<feature type="chain" id="PRO_0000101945" description="UDP-N-acetylmuramoyl-L-alanyl-D-glutamate--L-lysine ligase">
    <location>
        <begin position="1"/>
        <end position="494"/>
    </location>
</feature>
<feature type="short sequence motif" description="L-lysine recognition motif">
    <location>
        <begin position="406"/>
        <end position="409"/>
    </location>
</feature>
<feature type="binding site" evidence="1">
    <location>
        <position position="30"/>
    </location>
    <ligand>
        <name>UDP-N-acetyl-alpha-D-muramoyl-L-alanyl-D-glutamate</name>
        <dbReference type="ChEBI" id="CHEBI:83900"/>
    </ligand>
</feature>
<feature type="binding site" evidence="1">
    <location>
        <begin position="110"/>
        <end position="116"/>
    </location>
    <ligand>
        <name>ATP</name>
        <dbReference type="ChEBI" id="CHEBI:30616"/>
    </ligand>
</feature>
<feature type="binding site" evidence="1">
    <location>
        <begin position="152"/>
        <end position="153"/>
    </location>
    <ligand>
        <name>UDP-N-acetyl-alpha-D-muramoyl-L-alanyl-D-glutamate</name>
        <dbReference type="ChEBI" id="CHEBI:83900"/>
    </ligand>
</feature>
<feature type="binding site" evidence="1">
    <location>
        <position position="179"/>
    </location>
    <ligand>
        <name>UDP-N-acetyl-alpha-D-muramoyl-L-alanyl-D-glutamate</name>
        <dbReference type="ChEBI" id="CHEBI:83900"/>
    </ligand>
</feature>
<feature type="binding site" evidence="1">
    <location>
        <position position="187"/>
    </location>
    <ligand>
        <name>UDP-N-acetyl-alpha-D-muramoyl-L-alanyl-D-glutamate</name>
        <dbReference type="ChEBI" id="CHEBI:83900"/>
    </ligand>
</feature>
<feature type="modified residue" description="N6-carboxylysine" evidence="1">
    <location>
        <position position="219"/>
    </location>
</feature>